<sequence length="338" mass="36460">MSSDPTGRPIETRKLRHLEACLRPESQYQKVKTGLDSVPWPYRALPESNLEEMRLDTVFLGRRLKAPVLIGAMTGGAEKAGVINRNLATAARNLGLGMMLGSQRVMLEHPDAWESFNVREVAPEILLIGNLGAAQFMLGYGAEQARRAVDEVMADALAIHLNPLQEALQRGGDTRWQGVTYRLKQVARELDFPVIIKEVGHGLDAATLRALADGPFAAYDVAGAGGTSWARVEQLVAHGQVHSPDLCELGVPTAQALRQARKTLPGAQLIASGGIRSGLDAARALSLGAEVVAVARPLLEPALDSSEAAEAWLRNFIQELRVALFVGGYRDVREVRGG</sequence>
<evidence type="ECO:0000255" key="1">
    <source>
        <dbReference type="HAMAP-Rule" id="MF_00354"/>
    </source>
</evidence>
<evidence type="ECO:0000305" key="2"/>
<keyword id="KW-0963">Cytoplasm</keyword>
<keyword id="KW-0285">Flavoprotein</keyword>
<keyword id="KW-0288">FMN</keyword>
<keyword id="KW-0413">Isomerase</keyword>
<keyword id="KW-0414">Isoprene biosynthesis</keyword>
<keyword id="KW-0460">Magnesium</keyword>
<keyword id="KW-0479">Metal-binding</keyword>
<keyword id="KW-0521">NADP</keyword>
<keyword id="KW-1185">Reference proteome</keyword>
<name>IDI2_DEIRA</name>
<proteinExistence type="inferred from homology"/>
<organism>
    <name type="scientific">Deinococcus radiodurans (strain ATCC 13939 / DSM 20539 / JCM 16871 / CCUG 27074 / LMG 4051 / NBRC 15346 / NCIMB 9279 / VKM B-1422 / R1)</name>
    <dbReference type="NCBI Taxonomy" id="243230"/>
    <lineage>
        <taxon>Bacteria</taxon>
        <taxon>Thermotogati</taxon>
        <taxon>Deinococcota</taxon>
        <taxon>Deinococci</taxon>
        <taxon>Deinococcales</taxon>
        <taxon>Deinococcaceae</taxon>
        <taxon>Deinococcus</taxon>
    </lineage>
</organism>
<gene>
    <name evidence="1" type="primary">fni</name>
    <name type="ordered locus">DR_1087</name>
</gene>
<dbReference type="EC" id="5.3.3.2" evidence="1"/>
<dbReference type="EMBL" id="AE000513">
    <property type="protein sequence ID" value="AAF10661.1"/>
    <property type="status" value="ALT_SEQ"/>
    <property type="molecule type" value="Genomic_DNA"/>
</dbReference>
<dbReference type="PIR" id="G75437">
    <property type="entry name" value="G75437"/>
</dbReference>
<dbReference type="RefSeq" id="NP_294811.1">
    <property type="nucleotide sequence ID" value="NC_001263.1"/>
</dbReference>
<dbReference type="RefSeq" id="WP_010887730.1">
    <property type="nucleotide sequence ID" value="NZ_CP015081.1"/>
</dbReference>
<dbReference type="SMR" id="Q9RVE2"/>
<dbReference type="FunCoup" id="Q9RVE2">
    <property type="interactions" value="77"/>
</dbReference>
<dbReference type="STRING" id="243230.DR_1087"/>
<dbReference type="PaxDb" id="243230-DR_1087"/>
<dbReference type="EnsemblBacteria" id="AAF10661">
    <property type="protein sequence ID" value="AAF10661"/>
    <property type="gene ID" value="DR_1087"/>
</dbReference>
<dbReference type="KEGG" id="dra:DR_1087"/>
<dbReference type="PATRIC" id="fig|243230.17.peg.1282"/>
<dbReference type="eggNOG" id="COG1304">
    <property type="taxonomic scope" value="Bacteria"/>
</dbReference>
<dbReference type="HOGENOM" id="CLU_065515_1_0_0"/>
<dbReference type="InParanoid" id="Q9RVE2"/>
<dbReference type="OrthoDB" id="9795032at2"/>
<dbReference type="Proteomes" id="UP000002524">
    <property type="component" value="Chromosome 1"/>
</dbReference>
<dbReference type="GO" id="GO:0005737">
    <property type="term" value="C:cytoplasm"/>
    <property type="evidence" value="ECO:0007669"/>
    <property type="project" value="UniProtKB-SubCell"/>
</dbReference>
<dbReference type="GO" id="GO:0010181">
    <property type="term" value="F:FMN binding"/>
    <property type="evidence" value="ECO:0007669"/>
    <property type="project" value="UniProtKB-UniRule"/>
</dbReference>
<dbReference type="GO" id="GO:0004452">
    <property type="term" value="F:isopentenyl-diphosphate delta-isomerase activity"/>
    <property type="evidence" value="ECO:0007669"/>
    <property type="project" value="UniProtKB-UniRule"/>
</dbReference>
<dbReference type="GO" id="GO:0000287">
    <property type="term" value="F:magnesium ion binding"/>
    <property type="evidence" value="ECO:0007669"/>
    <property type="project" value="UniProtKB-UniRule"/>
</dbReference>
<dbReference type="GO" id="GO:0070402">
    <property type="term" value="F:NADPH binding"/>
    <property type="evidence" value="ECO:0007669"/>
    <property type="project" value="UniProtKB-UniRule"/>
</dbReference>
<dbReference type="GO" id="GO:0016491">
    <property type="term" value="F:oxidoreductase activity"/>
    <property type="evidence" value="ECO:0007669"/>
    <property type="project" value="InterPro"/>
</dbReference>
<dbReference type="GO" id="GO:0008299">
    <property type="term" value="P:isoprenoid biosynthetic process"/>
    <property type="evidence" value="ECO:0007669"/>
    <property type="project" value="UniProtKB-UniRule"/>
</dbReference>
<dbReference type="CDD" id="cd02811">
    <property type="entry name" value="IDI-2_FMN"/>
    <property type="match status" value="1"/>
</dbReference>
<dbReference type="Gene3D" id="3.20.20.70">
    <property type="entry name" value="Aldolase class I"/>
    <property type="match status" value="1"/>
</dbReference>
<dbReference type="HAMAP" id="MF_00354">
    <property type="entry name" value="Idi_2"/>
    <property type="match status" value="1"/>
</dbReference>
<dbReference type="InterPro" id="IPR013785">
    <property type="entry name" value="Aldolase_TIM"/>
</dbReference>
<dbReference type="InterPro" id="IPR000262">
    <property type="entry name" value="FMN-dep_DH"/>
</dbReference>
<dbReference type="InterPro" id="IPR011179">
    <property type="entry name" value="IPdP_isomerase"/>
</dbReference>
<dbReference type="NCBIfam" id="TIGR02151">
    <property type="entry name" value="IPP_isom_2"/>
    <property type="match status" value="1"/>
</dbReference>
<dbReference type="PANTHER" id="PTHR43665">
    <property type="entry name" value="ISOPENTENYL-DIPHOSPHATE DELTA-ISOMERASE"/>
    <property type="match status" value="1"/>
</dbReference>
<dbReference type="PANTHER" id="PTHR43665:SF1">
    <property type="entry name" value="ISOPENTENYL-DIPHOSPHATE DELTA-ISOMERASE"/>
    <property type="match status" value="1"/>
</dbReference>
<dbReference type="Pfam" id="PF01070">
    <property type="entry name" value="FMN_dh"/>
    <property type="match status" value="1"/>
</dbReference>
<dbReference type="PIRSF" id="PIRSF003314">
    <property type="entry name" value="IPP_isomerase"/>
    <property type="match status" value="1"/>
</dbReference>
<dbReference type="SUPFAM" id="SSF51395">
    <property type="entry name" value="FMN-linked oxidoreductases"/>
    <property type="match status" value="1"/>
</dbReference>
<accession>Q9RVE2</accession>
<comment type="function">
    <text evidence="1">Involved in the biosynthesis of isoprenoids. Catalyzes the 1,3-allylic rearrangement of the homoallylic substrate isopentenyl (IPP) to its allylic isomer, dimethylallyl diphosphate (DMAPP).</text>
</comment>
<comment type="catalytic activity">
    <reaction evidence="1">
        <text>isopentenyl diphosphate = dimethylallyl diphosphate</text>
        <dbReference type="Rhea" id="RHEA:23284"/>
        <dbReference type="ChEBI" id="CHEBI:57623"/>
        <dbReference type="ChEBI" id="CHEBI:128769"/>
        <dbReference type="EC" id="5.3.3.2"/>
    </reaction>
</comment>
<comment type="cofactor">
    <cofactor evidence="1">
        <name>FMN</name>
        <dbReference type="ChEBI" id="CHEBI:58210"/>
    </cofactor>
</comment>
<comment type="cofactor">
    <cofactor evidence="1">
        <name>NADPH</name>
        <dbReference type="ChEBI" id="CHEBI:57783"/>
    </cofactor>
</comment>
<comment type="cofactor">
    <cofactor evidence="1">
        <name>Mg(2+)</name>
        <dbReference type="ChEBI" id="CHEBI:18420"/>
    </cofactor>
</comment>
<comment type="subunit">
    <text evidence="1">Homooctamer. Dimer of tetramers.</text>
</comment>
<comment type="subcellular location">
    <subcellularLocation>
        <location evidence="1">Cytoplasm</location>
    </subcellularLocation>
</comment>
<comment type="similarity">
    <text evidence="1">Belongs to the IPP isomerase type 2 family.</text>
</comment>
<comment type="sequence caution" evidence="2">
    <conflict type="erroneous termination">
        <sequence resource="EMBL-CDS" id="AAF10661"/>
    </conflict>
    <text>Truncated C-terminus.</text>
</comment>
<protein>
    <recommendedName>
        <fullName evidence="1">Isopentenyl-diphosphate delta-isomerase</fullName>
        <shortName evidence="1">IPP isomerase</shortName>
        <ecNumber evidence="1">5.3.3.2</ecNumber>
    </recommendedName>
    <alternativeName>
        <fullName evidence="1">Isopentenyl diphosphate:dimethylallyl diphosphate isomerase</fullName>
    </alternativeName>
    <alternativeName>
        <fullName evidence="1">Isopentenyl pyrophosphate isomerase</fullName>
    </alternativeName>
    <alternativeName>
        <fullName evidence="1">Type 2 isopentenyl diphosphate isomerase</fullName>
        <shortName evidence="1">IDI-2</shortName>
    </alternativeName>
</protein>
<feature type="chain" id="PRO_0000134407" description="Isopentenyl-diphosphate delta-isomerase">
    <location>
        <begin position="1"/>
        <end position="338"/>
    </location>
</feature>
<feature type="binding site" evidence="1">
    <location>
        <begin position="13"/>
        <end position="14"/>
    </location>
    <ligand>
        <name>substrate</name>
    </ligand>
</feature>
<feature type="binding site" evidence="1">
    <location>
        <begin position="72"/>
        <end position="74"/>
    </location>
    <ligand>
        <name>FMN</name>
        <dbReference type="ChEBI" id="CHEBI:58210"/>
    </ligand>
</feature>
<feature type="binding site" evidence="1">
    <location>
        <begin position="102"/>
        <end position="104"/>
    </location>
    <ligand>
        <name>substrate</name>
    </ligand>
</feature>
<feature type="binding site" evidence="1">
    <location>
        <position position="102"/>
    </location>
    <ligand>
        <name>FMN</name>
        <dbReference type="ChEBI" id="CHEBI:58210"/>
    </ligand>
</feature>
<feature type="binding site" evidence="1">
    <location>
        <position position="130"/>
    </location>
    <ligand>
        <name>FMN</name>
        <dbReference type="ChEBI" id="CHEBI:58210"/>
    </ligand>
</feature>
<feature type="binding site" evidence="1">
    <location>
        <position position="165"/>
    </location>
    <ligand>
        <name>substrate</name>
    </ligand>
</feature>
<feature type="binding site" evidence="1">
    <location>
        <position position="166"/>
    </location>
    <ligand>
        <name>Mg(2+)</name>
        <dbReference type="ChEBI" id="CHEBI:18420"/>
    </ligand>
</feature>
<feature type="binding site" evidence="1">
    <location>
        <position position="197"/>
    </location>
    <ligand>
        <name>FMN</name>
        <dbReference type="ChEBI" id="CHEBI:58210"/>
    </ligand>
</feature>
<feature type="binding site" evidence="1">
    <location>
        <position position="227"/>
    </location>
    <ligand>
        <name>FMN</name>
        <dbReference type="ChEBI" id="CHEBI:58210"/>
    </ligand>
</feature>
<feature type="binding site" evidence="1">
    <location>
        <begin position="274"/>
        <end position="276"/>
    </location>
    <ligand>
        <name>FMN</name>
        <dbReference type="ChEBI" id="CHEBI:58210"/>
    </ligand>
</feature>
<feature type="binding site" evidence="1">
    <location>
        <begin position="295"/>
        <end position="296"/>
    </location>
    <ligand>
        <name>FMN</name>
        <dbReference type="ChEBI" id="CHEBI:58210"/>
    </ligand>
</feature>
<reference key="1">
    <citation type="journal article" date="1999" name="Science">
        <title>Genome sequence of the radioresistant bacterium Deinococcus radiodurans R1.</title>
        <authorList>
            <person name="White O."/>
            <person name="Eisen J.A."/>
            <person name="Heidelberg J.F."/>
            <person name="Hickey E.K."/>
            <person name="Peterson J.D."/>
            <person name="Dodson R.J."/>
            <person name="Haft D.H."/>
            <person name="Gwinn M.L."/>
            <person name="Nelson W.C."/>
            <person name="Richardson D.L."/>
            <person name="Moffat K.S."/>
            <person name="Qin H."/>
            <person name="Jiang L."/>
            <person name="Pamphile W."/>
            <person name="Crosby M."/>
            <person name="Shen M."/>
            <person name="Vamathevan J.J."/>
            <person name="Lam P."/>
            <person name="McDonald L.A."/>
            <person name="Utterback T.R."/>
            <person name="Zalewski C."/>
            <person name="Makarova K.S."/>
            <person name="Aravind L."/>
            <person name="Daly M.J."/>
            <person name="Minton K.W."/>
            <person name="Fleischmann R.D."/>
            <person name="Ketchum K.A."/>
            <person name="Nelson K.E."/>
            <person name="Salzberg S.L."/>
            <person name="Smith H.O."/>
            <person name="Venter J.C."/>
            <person name="Fraser C.M."/>
        </authorList>
    </citation>
    <scope>NUCLEOTIDE SEQUENCE [LARGE SCALE GENOMIC DNA]</scope>
    <source>
        <strain>ATCC 13939 / DSM 20539 / JCM 16871 / CCUG 27074 / LMG 4051 / NBRC 15346 / NCIMB 9279 / VKM B-1422 / R1</strain>
    </source>
</reference>